<proteinExistence type="inferred from homology"/>
<sequence length="130" mass="14884">MKDWLDEIHWNSDGLVPAIAQDHKTGRVLMMAWMNREALSLTASENRAIYWSRSRGKLWRKGEESGHVQKLHELRLDCDADVIILMVEQIGGIACHTGRESCFYRVYENSGWKTVDPVLKDPDAIYSAGH</sequence>
<gene>
    <name evidence="1" type="primary">hisI</name>
    <name type="ordered locus">PSPPH_0369</name>
</gene>
<organism>
    <name type="scientific">Pseudomonas savastanoi pv. phaseolicola (strain 1448A / Race 6)</name>
    <name type="common">Pseudomonas syringae pv. phaseolicola (strain 1448A / Race 6)</name>
    <dbReference type="NCBI Taxonomy" id="264730"/>
    <lineage>
        <taxon>Bacteria</taxon>
        <taxon>Pseudomonadati</taxon>
        <taxon>Pseudomonadota</taxon>
        <taxon>Gammaproteobacteria</taxon>
        <taxon>Pseudomonadales</taxon>
        <taxon>Pseudomonadaceae</taxon>
        <taxon>Pseudomonas</taxon>
    </lineage>
</organism>
<evidence type="ECO:0000255" key="1">
    <source>
        <dbReference type="HAMAP-Rule" id="MF_01021"/>
    </source>
</evidence>
<reference key="1">
    <citation type="journal article" date="2005" name="J. Bacteriol.">
        <title>Whole-genome sequence analysis of Pseudomonas syringae pv. phaseolicola 1448A reveals divergence among pathovars in genes involved in virulence and transposition.</title>
        <authorList>
            <person name="Joardar V."/>
            <person name="Lindeberg M."/>
            <person name="Jackson R.W."/>
            <person name="Selengut J."/>
            <person name="Dodson R."/>
            <person name="Brinkac L.M."/>
            <person name="Daugherty S.C."/>
            <person name="DeBoy R.T."/>
            <person name="Durkin A.S."/>
            <person name="Gwinn Giglio M."/>
            <person name="Madupu R."/>
            <person name="Nelson W.C."/>
            <person name="Rosovitz M.J."/>
            <person name="Sullivan S.A."/>
            <person name="Crabtree J."/>
            <person name="Creasy T."/>
            <person name="Davidsen T.M."/>
            <person name="Haft D.H."/>
            <person name="Zafar N."/>
            <person name="Zhou L."/>
            <person name="Halpin R."/>
            <person name="Holley T."/>
            <person name="Khouri H.M."/>
            <person name="Feldblyum T.V."/>
            <person name="White O."/>
            <person name="Fraser C.M."/>
            <person name="Chatterjee A.K."/>
            <person name="Cartinhour S."/>
            <person name="Schneider D."/>
            <person name="Mansfield J.W."/>
            <person name="Collmer A."/>
            <person name="Buell R."/>
        </authorList>
    </citation>
    <scope>NUCLEOTIDE SEQUENCE [LARGE SCALE GENOMIC DNA]</scope>
    <source>
        <strain>1448A / Race 6</strain>
    </source>
</reference>
<protein>
    <recommendedName>
        <fullName evidence="1">Phosphoribosyl-AMP cyclohydrolase</fullName>
        <shortName evidence="1">PRA-CH</shortName>
        <ecNumber evidence="1">3.5.4.19</ecNumber>
    </recommendedName>
</protein>
<keyword id="KW-0028">Amino-acid biosynthesis</keyword>
<keyword id="KW-0963">Cytoplasm</keyword>
<keyword id="KW-0368">Histidine biosynthesis</keyword>
<keyword id="KW-0378">Hydrolase</keyword>
<keyword id="KW-0460">Magnesium</keyword>
<keyword id="KW-0479">Metal-binding</keyword>
<keyword id="KW-0862">Zinc</keyword>
<accession>Q48PJ7</accession>
<feature type="chain" id="PRO_0000229837" description="Phosphoribosyl-AMP cyclohydrolase">
    <location>
        <begin position="1"/>
        <end position="130"/>
    </location>
</feature>
<feature type="binding site" evidence="1">
    <location>
        <position position="77"/>
    </location>
    <ligand>
        <name>Mg(2+)</name>
        <dbReference type="ChEBI" id="CHEBI:18420"/>
    </ligand>
</feature>
<feature type="binding site" evidence="1">
    <location>
        <position position="78"/>
    </location>
    <ligand>
        <name>Zn(2+)</name>
        <dbReference type="ChEBI" id="CHEBI:29105"/>
        <note>ligand shared between dimeric partners</note>
    </ligand>
</feature>
<feature type="binding site" evidence="1">
    <location>
        <position position="79"/>
    </location>
    <ligand>
        <name>Mg(2+)</name>
        <dbReference type="ChEBI" id="CHEBI:18420"/>
    </ligand>
</feature>
<feature type="binding site" evidence="1">
    <location>
        <position position="81"/>
    </location>
    <ligand>
        <name>Mg(2+)</name>
        <dbReference type="ChEBI" id="CHEBI:18420"/>
    </ligand>
</feature>
<feature type="binding site" evidence="1">
    <location>
        <position position="95"/>
    </location>
    <ligand>
        <name>Zn(2+)</name>
        <dbReference type="ChEBI" id="CHEBI:29105"/>
        <note>ligand shared between dimeric partners</note>
    </ligand>
</feature>
<feature type="binding site" evidence="1">
    <location>
        <position position="102"/>
    </location>
    <ligand>
        <name>Zn(2+)</name>
        <dbReference type="ChEBI" id="CHEBI:29105"/>
        <note>ligand shared between dimeric partners</note>
    </ligand>
</feature>
<name>HIS3_PSE14</name>
<comment type="function">
    <text evidence="1">Catalyzes the hydrolysis of the adenine ring of phosphoribosyl-AMP.</text>
</comment>
<comment type="catalytic activity">
    <reaction evidence="1">
        <text>1-(5-phospho-beta-D-ribosyl)-5'-AMP + H2O = 1-(5-phospho-beta-D-ribosyl)-5-[(5-phospho-beta-D-ribosylamino)methylideneamino]imidazole-4-carboxamide</text>
        <dbReference type="Rhea" id="RHEA:20049"/>
        <dbReference type="ChEBI" id="CHEBI:15377"/>
        <dbReference type="ChEBI" id="CHEBI:58435"/>
        <dbReference type="ChEBI" id="CHEBI:59457"/>
        <dbReference type="EC" id="3.5.4.19"/>
    </reaction>
</comment>
<comment type="cofactor">
    <cofactor evidence="1">
        <name>Mg(2+)</name>
        <dbReference type="ChEBI" id="CHEBI:18420"/>
    </cofactor>
    <text evidence="1">Binds 1 Mg(2+) ion per subunit.</text>
</comment>
<comment type="cofactor">
    <cofactor evidence="1">
        <name>Zn(2+)</name>
        <dbReference type="ChEBI" id="CHEBI:29105"/>
    </cofactor>
    <text evidence="1">Binds 1 zinc ion per subunit.</text>
</comment>
<comment type="pathway">
    <text evidence="1">Amino-acid biosynthesis; L-histidine biosynthesis; L-histidine from 5-phospho-alpha-D-ribose 1-diphosphate: step 3/9.</text>
</comment>
<comment type="subunit">
    <text evidence="1">Homodimer.</text>
</comment>
<comment type="subcellular location">
    <subcellularLocation>
        <location evidence="1">Cytoplasm</location>
    </subcellularLocation>
</comment>
<comment type="similarity">
    <text evidence="1">Belongs to the PRA-CH family.</text>
</comment>
<dbReference type="EC" id="3.5.4.19" evidence="1"/>
<dbReference type="EMBL" id="CP000058">
    <property type="protein sequence ID" value="AAZ37348.1"/>
    <property type="molecule type" value="Genomic_DNA"/>
</dbReference>
<dbReference type="RefSeq" id="WP_002551632.1">
    <property type="nucleotide sequence ID" value="NC_005773.3"/>
</dbReference>
<dbReference type="SMR" id="Q48PJ7"/>
<dbReference type="GeneID" id="69857431"/>
<dbReference type="KEGG" id="psp:PSPPH_0369"/>
<dbReference type="eggNOG" id="COG0139">
    <property type="taxonomic scope" value="Bacteria"/>
</dbReference>
<dbReference type="HOGENOM" id="CLU_048577_5_0_6"/>
<dbReference type="UniPathway" id="UPA00031">
    <property type="reaction ID" value="UER00008"/>
</dbReference>
<dbReference type="Proteomes" id="UP000000551">
    <property type="component" value="Chromosome"/>
</dbReference>
<dbReference type="GO" id="GO:0005737">
    <property type="term" value="C:cytoplasm"/>
    <property type="evidence" value="ECO:0007669"/>
    <property type="project" value="UniProtKB-SubCell"/>
</dbReference>
<dbReference type="GO" id="GO:0000287">
    <property type="term" value="F:magnesium ion binding"/>
    <property type="evidence" value="ECO:0007669"/>
    <property type="project" value="UniProtKB-UniRule"/>
</dbReference>
<dbReference type="GO" id="GO:0004635">
    <property type="term" value="F:phosphoribosyl-AMP cyclohydrolase activity"/>
    <property type="evidence" value="ECO:0007669"/>
    <property type="project" value="UniProtKB-UniRule"/>
</dbReference>
<dbReference type="GO" id="GO:0008270">
    <property type="term" value="F:zinc ion binding"/>
    <property type="evidence" value="ECO:0007669"/>
    <property type="project" value="UniProtKB-UniRule"/>
</dbReference>
<dbReference type="GO" id="GO:0000105">
    <property type="term" value="P:L-histidine biosynthetic process"/>
    <property type="evidence" value="ECO:0007669"/>
    <property type="project" value="UniProtKB-UniRule"/>
</dbReference>
<dbReference type="FunFam" id="3.10.20.810:FF:000001">
    <property type="entry name" value="Histidine biosynthesis bifunctional protein HisIE"/>
    <property type="match status" value="1"/>
</dbReference>
<dbReference type="Gene3D" id="3.10.20.810">
    <property type="entry name" value="Phosphoribosyl-AMP cyclohydrolase"/>
    <property type="match status" value="1"/>
</dbReference>
<dbReference type="HAMAP" id="MF_01021">
    <property type="entry name" value="HisI"/>
    <property type="match status" value="1"/>
</dbReference>
<dbReference type="InterPro" id="IPR026660">
    <property type="entry name" value="PRA-CH"/>
</dbReference>
<dbReference type="InterPro" id="IPR002496">
    <property type="entry name" value="PRib_AMP_CycHydrolase_dom"/>
</dbReference>
<dbReference type="InterPro" id="IPR038019">
    <property type="entry name" value="PRib_AMP_CycHydrolase_sf"/>
</dbReference>
<dbReference type="NCBIfam" id="NF000768">
    <property type="entry name" value="PRK00051.1"/>
    <property type="match status" value="1"/>
</dbReference>
<dbReference type="PANTHER" id="PTHR42945">
    <property type="entry name" value="HISTIDINE BIOSYNTHESIS BIFUNCTIONAL PROTEIN"/>
    <property type="match status" value="1"/>
</dbReference>
<dbReference type="PANTHER" id="PTHR42945:SF1">
    <property type="entry name" value="HISTIDINE BIOSYNTHESIS BIFUNCTIONAL PROTEIN HIS7"/>
    <property type="match status" value="1"/>
</dbReference>
<dbReference type="Pfam" id="PF01502">
    <property type="entry name" value="PRA-CH"/>
    <property type="match status" value="1"/>
</dbReference>
<dbReference type="SUPFAM" id="SSF141734">
    <property type="entry name" value="HisI-like"/>
    <property type="match status" value="1"/>
</dbReference>